<feature type="chain" id="PRO_0000199568" description="Transposon Ty1-MR2 Gag-Pol polyprotein">
    <location>
        <begin position="1"/>
        <end position="1755"/>
    </location>
</feature>
<feature type="chain" id="PRO_0000279133" description="Capsid protein" evidence="1">
    <location>
        <begin position="1"/>
        <end position="401"/>
    </location>
</feature>
<feature type="chain" id="PRO_0000279134" description="Ty1 protease" evidence="1">
    <location>
        <begin position="402"/>
        <end position="582"/>
    </location>
</feature>
<feature type="chain" id="PRO_0000279135" description="Integrase" evidence="1">
    <location>
        <begin position="583"/>
        <end position="1217"/>
    </location>
</feature>
<feature type="chain" id="PRO_0000279136" description="Reverse transcriptase/ribonuclease H" evidence="1">
    <location>
        <begin position="1218"/>
        <end position="1755"/>
    </location>
</feature>
<feature type="domain" description="Integrase catalytic" evidence="3">
    <location>
        <begin position="660"/>
        <end position="835"/>
    </location>
</feature>
<feature type="domain" description="Reverse transcriptase Ty1/copia-type">
    <location>
        <begin position="1338"/>
        <end position="1476"/>
    </location>
</feature>
<feature type="domain" description="RNase H Ty1/copia-type">
    <location>
        <begin position="1610"/>
        <end position="1752"/>
    </location>
</feature>
<feature type="region of interest" description="Disordered" evidence="5">
    <location>
        <begin position="1"/>
        <end position="93"/>
    </location>
</feature>
<feature type="region of interest" description="Disordered" evidence="5">
    <location>
        <begin position="126"/>
        <end position="173"/>
    </location>
</feature>
<feature type="region of interest" description="RNA-binding" evidence="1">
    <location>
        <begin position="299"/>
        <end position="401"/>
    </location>
</feature>
<feature type="region of interest" description="Disordered" evidence="5">
    <location>
        <begin position="352"/>
        <end position="421"/>
    </location>
</feature>
<feature type="region of interest" description="Integrase-type zinc finger-like">
    <location>
        <begin position="583"/>
        <end position="640"/>
    </location>
</feature>
<feature type="region of interest" description="Disordered" evidence="5">
    <location>
        <begin position="956"/>
        <end position="1087"/>
    </location>
</feature>
<feature type="region of interest" description="Disordered" evidence="5">
    <location>
        <begin position="1092"/>
        <end position="1111"/>
    </location>
</feature>
<feature type="region of interest" description="Disordered" evidence="5">
    <location>
        <begin position="1130"/>
        <end position="1186"/>
    </location>
</feature>
<feature type="short sequence motif" description="Bipartite nuclear localization signal" evidence="1">
    <location>
        <begin position="1178"/>
        <end position="1212"/>
    </location>
</feature>
<feature type="compositionally biased region" description="Polar residues" evidence="5">
    <location>
        <begin position="1"/>
        <end position="10"/>
    </location>
</feature>
<feature type="compositionally biased region" description="Polar residues" evidence="5">
    <location>
        <begin position="48"/>
        <end position="60"/>
    </location>
</feature>
<feature type="compositionally biased region" description="Polar residues" evidence="5">
    <location>
        <begin position="127"/>
        <end position="152"/>
    </location>
</feature>
<feature type="compositionally biased region" description="Low complexity" evidence="5">
    <location>
        <begin position="153"/>
        <end position="165"/>
    </location>
</feature>
<feature type="compositionally biased region" description="Low complexity" evidence="5">
    <location>
        <begin position="402"/>
        <end position="418"/>
    </location>
</feature>
<feature type="compositionally biased region" description="Low complexity" evidence="5">
    <location>
        <begin position="960"/>
        <end position="969"/>
    </location>
</feature>
<feature type="compositionally biased region" description="Polar residues" evidence="5">
    <location>
        <begin position="1005"/>
        <end position="1015"/>
    </location>
</feature>
<feature type="compositionally biased region" description="Basic and acidic residues" evidence="5">
    <location>
        <begin position="1038"/>
        <end position="1053"/>
    </location>
</feature>
<feature type="compositionally biased region" description="Polar residues" evidence="5">
    <location>
        <begin position="1054"/>
        <end position="1082"/>
    </location>
</feature>
<feature type="compositionally biased region" description="Polar residues" evidence="5">
    <location>
        <begin position="1101"/>
        <end position="1111"/>
    </location>
</feature>
<feature type="active site" description="For protease activity; shared with dimeric partner" evidence="4">
    <location>
        <position position="461"/>
    </location>
</feature>
<feature type="binding site" evidence="3">
    <location>
        <position position="671"/>
    </location>
    <ligand>
        <name>Mg(2+)</name>
        <dbReference type="ChEBI" id="CHEBI:18420"/>
        <label>1</label>
        <note>catalytic; for integrase activity</note>
    </ligand>
</feature>
<feature type="binding site" evidence="3">
    <location>
        <position position="736"/>
    </location>
    <ligand>
        <name>Mg(2+)</name>
        <dbReference type="ChEBI" id="CHEBI:18420"/>
        <label>1</label>
        <note>catalytic; for integrase activity</note>
    </ligand>
</feature>
<feature type="binding site" evidence="3">
    <location>
        <position position="1346"/>
    </location>
    <ligand>
        <name>Mg(2+)</name>
        <dbReference type="ChEBI" id="CHEBI:18420"/>
        <label>2</label>
        <note>catalytic; for reverse transcriptase activity</note>
    </ligand>
</feature>
<feature type="binding site" evidence="3">
    <location>
        <position position="1427"/>
    </location>
    <ligand>
        <name>Mg(2+)</name>
        <dbReference type="ChEBI" id="CHEBI:18420"/>
        <label>2</label>
        <note>catalytic; for reverse transcriptase activity</note>
    </ligand>
</feature>
<feature type="binding site" evidence="3">
    <location>
        <position position="1428"/>
    </location>
    <ligand>
        <name>Mg(2+)</name>
        <dbReference type="ChEBI" id="CHEBI:18420"/>
        <label>2</label>
        <note>catalytic; for reverse transcriptase activity</note>
    </ligand>
</feature>
<feature type="binding site" evidence="3">
    <location>
        <position position="1610"/>
    </location>
    <ligand>
        <name>Mg(2+)</name>
        <dbReference type="ChEBI" id="CHEBI:18420"/>
        <label>3</label>
        <note>catalytic; for RNase H activity</note>
    </ligand>
</feature>
<feature type="binding site" evidence="3">
    <location>
        <position position="1652"/>
    </location>
    <ligand>
        <name>Mg(2+)</name>
        <dbReference type="ChEBI" id="CHEBI:18420"/>
        <label>3</label>
        <note>catalytic; for RNase H activity</note>
    </ligand>
</feature>
<feature type="binding site" evidence="3">
    <location>
        <position position="1685"/>
    </location>
    <ligand>
        <name>Mg(2+)</name>
        <dbReference type="ChEBI" id="CHEBI:18420"/>
        <label>3</label>
        <note>catalytic; for RNase H activity</note>
    </ligand>
</feature>
<feature type="site" description="Cleavage; by Ty1 protease" evidence="1">
    <location>
        <begin position="401"/>
        <end position="402"/>
    </location>
</feature>
<feature type="site" description="Cleavage; by Ty1 protease" evidence="1">
    <location>
        <begin position="582"/>
        <end position="583"/>
    </location>
</feature>
<feature type="site" description="Cleavage; by Ty1 protease" evidence="1">
    <location>
        <begin position="1217"/>
        <end position="1218"/>
    </location>
</feature>
<feature type="modified residue" description="Phosphoserine" evidence="2">
    <location>
        <position position="416"/>
    </location>
</feature>
<organism>
    <name type="scientific">Saccharomyces cerevisiae (strain ATCC 204508 / S288c)</name>
    <name type="common">Baker's yeast</name>
    <dbReference type="NCBI Taxonomy" id="559292"/>
    <lineage>
        <taxon>Eukaryota</taxon>
        <taxon>Fungi</taxon>
        <taxon>Dikarya</taxon>
        <taxon>Ascomycota</taxon>
        <taxon>Saccharomycotina</taxon>
        <taxon>Saccharomycetes</taxon>
        <taxon>Saccharomycetales</taxon>
        <taxon>Saccharomycetaceae</taxon>
        <taxon>Saccharomyces</taxon>
    </lineage>
</organism>
<evidence type="ECO:0000250" key="1"/>
<evidence type="ECO:0000250" key="2">
    <source>
        <dbReference type="UniProtKB" id="Q99231"/>
    </source>
</evidence>
<evidence type="ECO:0000255" key="3">
    <source>
        <dbReference type="PROSITE-ProRule" id="PRU00457"/>
    </source>
</evidence>
<evidence type="ECO:0000255" key="4">
    <source>
        <dbReference type="PROSITE-ProRule" id="PRU10094"/>
    </source>
</evidence>
<evidence type="ECO:0000256" key="5">
    <source>
        <dbReference type="SAM" id="MobiDB-lite"/>
    </source>
</evidence>
<evidence type="ECO:0000305" key="6"/>
<comment type="function">
    <text evidence="1">Capsid protein (CA) is the structural component of the virus-like particle (VLP), forming the shell that encapsulates the retrotransposons dimeric RNA genome. The particles are assembled from trimer-clustered units and there are holes in the capsid shells that allow for the diffusion of macromolecules. CA also has nucleocapsid-like chaperone activity, promoting primer tRNA(i)-Met annealing to the multipartite primer-binding site (PBS), dimerization of Ty1 RNA and initiation of reverse transcription (By similarity).</text>
</comment>
<comment type="function">
    <text evidence="1">The aspartyl protease (PR) mediates the proteolytic cleavages of the Gag and Gag-Pol polyproteins after assembly of the VLP.</text>
</comment>
<comment type="function">
    <text evidence="1">Reverse transcriptase/ribonuclease H (RT) is a multifunctional enzyme that catalyzes the conversion of the retro-elements RNA genome into dsDNA within the VLP. The enzyme displays a DNA polymerase activity that can copy either DNA or RNA templates, and a ribonuclease H (RNase H) activity that cleaves the RNA strand of RNA-DNA heteroduplexes during plus-strand synthesis and hydrolyzes RNA primers. The conversion leads to a linear dsDNA copy of the retrotransposon that includes long terminal repeats (LTRs) at both ends (By similarity).</text>
</comment>
<comment type="function">
    <text evidence="1">Integrase (IN) targets the VLP to the nucleus, where a subparticle preintegration complex (PIC) containing at least integrase and the newly synthesized dsDNA copy of the retrotransposon must transit the nuclear membrane. Once in the nucleus, integrase performs the integration of the dsDNA into the host genome (By similarity).</text>
</comment>
<comment type="catalytic activity">
    <reaction>
        <text>DNA(n) + a 2'-deoxyribonucleoside 5'-triphosphate = DNA(n+1) + diphosphate</text>
        <dbReference type="Rhea" id="RHEA:22508"/>
        <dbReference type="Rhea" id="RHEA-COMP:17339"/>
        <dbReference type="Rhea" id="RHEA-COMP:17340"/>
        <dbReference type="ChEBI" id="CHEBI:33019"/>
        <dbReference type="ChEBI" id="CHEBI:61560"/>
        <dbReference type="ChEBI" id="CHEBI:173112"/>
        <dbReference type="EC" id="2.7.7.49"/>
    </reaction>
</comment>
<comment type="catalytic activity">
    <reaction>
        <text>DNA(n) + a 2'-deoxyribonucleoside 5'-triphosphate = DNA(n+1) + diphosphate</text>
        <dbReference type="Rhea" id="RHEA:22508"/>
        <dbReference type="Rhea" id="RHEA-COMP:17339"/>
        <dbReference type="Rhea" id="RHEA-COMP:17340"/>
        <dbReference type="ChEBI" id="CHEBI:33019"/>
        <dbReference type="ChEBI" id="CHEBI:61560"/>
        <dbReference type="ChEBI" id="CHEBI:173112"/>
        <dbReference type="EC" id="2.7.7.7"/>
    </reaction>
</comment>
<comment type="catalytic activity">
    <reaction>
        <text>Endonucleolytic cleavage to 5'-phosphomonoester.</text>
        <dbReference type="EC" id="3.1.26.4"/>
    </reaction>
</comment>
<comment type="subunit">
    <text evidence="1">The capsid protein forms a homotrimer, from which the VLPs are assembled. The protease is a homodimer, whose active site consists of two apposed aspartic acid residues (By similarity).</text>
</comment>
<comment type="subcellular location">
    <subcellularLocation>
        <location>Cytoplasm</location>
    </subcellularLocation>
    <subcellularLocation>
        <location evidence="1">Nucleus</location>
    </subcellularLocation>
</comment>
<comment type="alternative products">
    <event type="ribosomal frameshifting"/>
    <isoform>
        <id>Q04670-1</id>
        <name>Transposon Ty1-MR2 Gag-Pol polyprotein</name>
        <sequence type="displayed"/>
    </isoform>
    <isoform>
        <id>P0CX69-1</id>
        <name>Transposon Ty1-MR2 Gag polyprotein</name>
        <sequence type="external"/>
    </isoform>
    <text evidence="1">The Gag-Pol polyprotein is generated by a +1 ribosomal frameshift between the codons for Leu-435 and Gly-436. The ratio of Gag:Gag-Pol varies between 20:1 and 5:1 (By similarity).</text>
</comment>
<comment type="domain">
    <text evidence="1">The C-terminal RNA-binding region of CA is sufficient for all its nucleocapsid-like chaperone activities.</text>
</comment>
<comment type="domain">
    <text evidence="1">Integrase core domain contains the D-x(n)-D-x(35)-E motif, named for the phylogenetically conserved glutamic acid and aspartic acid residues and the invariant 35 amino acid spacing between the second and third acidic residues. Each acidic residue of the D,D(35)E motif is independently essential for the 3'-processing and strand transfer activities of purified integrase protein (By similarity).</text>
</comment>
<comment type="PTM">
    <text evidence="1">Initially, virus-like particles (VLPs) are composed of the structural unprocessed proteins Gag and Gag-Pol, and also contain the host initiator methionine tRNA (tRNA(i)-Met) which serves as a primer for minus-strand DNA synthesis, and a dimer of genomic Ty RNA. Processing of the polyproteins occurs within the particle and proceeds by an ordered pathway, called maturation. First, the protease (PR) is released by autocatalytic cleavage of the Gag-Pol polyprotein yielding capsid protein p45 and a Pol-p154 precursor protein. This cleavage is a prerequisite for subsequent processing of Pol-p154 at the remaining sites to release the mature structural and catalytic proteins. Maturation takes place prior to the RT reaction and is required to produce transposition-competent VLPs (By similarity).</text>
</comment>
<comment type="miscellaneous">
    <text>Retrotransposons are mobile genetic entities that are able to replicate via an RNA intermediate and a reverse transcription step. In contrast to retroviruses, retrotransposons are non-infectious, lack an envelope and remain intracellular. Ty1 retrotransposons belong to the copia elements (pseudoviridae).</text>
</comment>
<comment type="miscellaneous">
    <molecule>Isoform Transposon Ty1-MR2 Gag-Pol polyprotein</molecule>
    <text>Produced by +1 ribosomal frameshifting between codon Leu-435 and Gly-436 of the YMR051C ORF.</text>
</comment>
<comment type="sequence caution" evidence="6">
    <conflict type="erroneous gene model prediction">
        <sequence resource="EMBL-CDS" id="CAA89760"/>
    </conflict>
</comment>
<dbReference type="EC" id="3.4.23.-"/>
<dbReference type="EC" id="2.7.7.49"/>
<dbReference type="EC" id="2.7.7.7"/>
<dbReference type="EC" id="3.1.26.4"/>
<dbReference type="EMBL" id="Z49703">
    <property type="protein sequence ID" value="CAA89760.1"/>
    <property type="status" value="ALT_SEQ"/>
    <property type="molecule type" value="Genomic_DNA"/>
</dbReference>
<dbReference type="EMBL" id="BK006946">
    <property type="protein sequence ID" value="DAA09949.1"/>
    <property type="molecule type" value="Genomic_DNA"/>
</dbReference>
<dbReference type="PIR" id="S40969">
    <property type="entry name" value="S40969"/>
</dbReference>
<dbReference type="PIR" id="S69866">
    <property type="entry name" value="S69866"/>
</dbReference>
<dbReference type="RefSeq" id="NP_013765.1">
    <molecule id="Q04670-1"/>
    <property type="nucleotide sequence ID" value="NM_001182547.2"/>
</dbReference>
<dbReference type="SMR" id="Q04670"/>
<dbReference type="BioGRID" id="35225">
    <property type="interactions" value="11"/>
</dbReference>
<dbReference type="FunCoup" id="Q04670">
    <property type="interactions" value="66"/>
</dbReference>
<dbReference type="IntAct" id="Q04670">
    <property type="interactions" value="1"/>
</dbReference>
<dbReference type="GlyGen" id="Q04670">
    <property type="glycosylation" value="3 sites"/>
</dbReference>
<dbReference type="PaxDb" id="4932-YMR050C"/>
<dbReference type="PeptideAtlas" id="Q04670"/>
<dbReference type="GeneID" id="855070"/>
<dbReference type="KEGG" id="sce:YMR050C"/>
<dbReference type="AGR" id="SGD:S000004653"/>
<dbReference type="SGD" id="S000004653">
    <property type="gene designation" value="YMR050C"/>
</dbReference>
<dbReference type="VEuPathDB" id="FungiDB:YMR050C"/>
<dbReference type="eggNOG" id="KOG0017">
    <property type="taxonomic scope" value="Eukaryota"/>
</dbReference>
<dbReference type="HOGENOM" id="CLU_244151_0_0_1"/>
<dbReference type="InParanoid" id="Q04670"/>
<dbReference type="OrthoDB" id="4046078at2759"/>
<dbReference type="Proteomes" id="UP000002311">
    <property type="component" value="Chromosome XIII"/>
</dbReference>
<dbReference type="RNAct" id="Q04670">
    <property type="molecule type" value="protein"/>
</dbReference>
<dbReference type="GO" id="GO:0005737">
    <property type="term" value="C:cytoplasm"/>
    <property type="evidence" value="ECO:0007669"/>
    <property type="project" value="UniProtKB-SubCell"/>
</dbReference>
<dbReference type="GO" id="GO:0005634">
    <property type="term" value="C:nucleus"/>
    <property type="evidence" value="ECO:0000314"/>
    <property type="project" value="SGD"/>
</dbReference>
<dbReference type="GO" id="GO:0004190">
    <property type="term" value="F:aspartic-type endopeptidase activity"/>
    <property type="evidence" value="ECO:0007669"/>
    <property type="project" value="UniProtKB-KW"/>
</dbReference>
<dbReference type="GO" id="GO:0005524">
    <property type="term" value="F:ATP binding"/>
    <property type="evidence" value="ECO:0007669"/>
    <property type="project" value="UniProtKB-KW"/>
</dbReference>
<dbReference type="GO" id="GO:0003677">
    <property type="term" value="F:DNA binding"/>
    <property type="evidence" value="ECO:0007669"/>
    <property type="project" value="UniProtKB-KW"/>
</dbReference>
<dbReference type="GO" id="GO:0003887">
    <property type="term" value="F:DNA-directed DNA polymerase activity"/>
    <property type="evidence" value="ECO:0007669"/>
    <property type="project" value="UniProtKB-KW"/>
</dbReference>
<dbReference type="GO" id="GO:0003723">
    <property type="term" value="F:RNA binding"/>
    <property type="evidence" value="ECO:0007669"/>
    <property type="project" value="UniProtKB-KW"/>
</dbReference>
<dbReference type="GO" id="GO:0003964">
    <property type="term" value="F:RNA-directed DNA polymerase activity"/>
    <property type="evidence" value="ECO:0007669"/>
    <property type="project" value="UniProtKB-KW"/>
</dbReference>
<dbReference type="GO" id="GO:0004523">
    <property type="term" value="F:RNA-DNA hybrid ribonuclease activity"/>
    <property type="evidence" value="ECO:0007669"/>
    <property type="project" value="UniProtKB-EC"/>
</dbReference>
<dbReference type="GO" id="GO:0008270">
    <property type="term" value="F:zinc ion binding"/>
    <property type="evidence" value="ECO:0007669"/>
    <property type="project" value="UniProtKB-KW"/>
</dbReference>
<dbReference type="GO" id="GO:0015074">
    <property type="term" value="P:DNA integration"/>
    <property type="evidence" value="ECO:0007669"/>
    <property type="project" value="UniProtKB-KW"/>
</dbReference>
<dbReference type="GO" id="GO:0006310">
    <property type="term" value="P:DNA recombination"/>
    <property type="evidence" value="ECO:0007669"/>
    <property type="project" value="UniProtKB-KW"/>
</dbReference>
<dbReference type="GO" id="GO:0006508">
    <property type="term" value="P:proteolysis"/>
    <property type="evidence" value="ECO:0007669"/>
    <property type="project" value="UniProtKB-KW"/>
</dbReference>
<dbReference type="GO" id="GO:0032196">
    <property type="term" value="P:transposition"/>
    <property type="evidence" value="ECO:0007669"/>
    <property type="project" value="UniProtKB-KW"/>
</dbReference>
<dbReference type="GO" id="GO:0075523">
    <property type="term" value="P:viral translational frameshifting"/>
    <property type="evidence" value="ECO:0007669"/>
    <property type="project" value="UniProtKB-KW"/>
</dbReference>
<dbReference type="CDD" id="cd09272">
    <property type="entry name" value="RNase_HI_RT_Ty1"/>
    <property type="match status" value="1"/>
</dbReference>
<dbReference type="FunFam" id="3.30.420.10:FF:000050">
    <property type="entry name" value="Transposon Ty2-DR3 Gag-Pol polyprotein"/>
    <property type="match status" value="1"/>
</dbReference>
<dbReference type="Gene3D" id="3.30.420.10">
    <property type="entry name" value="Ribonuclease H-like superfamily/Ribonuclease H"/>
    <property type="match status" value="1"/>
</dbReference>
<dbReference type="InterPro" id="IPR001969">
    <property type="entry name" value="Aspartic_peptidase_AS"/>
</dbReference>
<dbReference type="InterPro" id="IPR043502">
    <property type="entry name" value="DNA/RNA_pol_sf"/>
</dbReference>
<dbReference type="InterPro" id="IPR001584">
    <property type="entry name" value="Integrase_cat-core"/>
</dbReference>
<dbReference type="InterPro" id="IPR039537">
    <property type="entry name" value="Retrotran_Ty1/copia-like"/>
</dbReference>
<dbReference type="InterPro" id="IPR012337">
    <property type="entry name" value="RNaseH-like_sf"/>
</dbReference>
<dbReference type="InterPro" id="IPR036397">
    <property type="entry name" value="RNaseH_sf"/>
</dbReference>
<dbReference type="InterPro" id="IPR013103">
    <property type="entry name" value="RVT_2"/>
</dbReference>
<dbReference type="InterPro" id="IPR015820">
    <property type="entry name" value="TYA"/>
</dbReference>
<dbReference type="PANTHER" id="PTHR42648">
    <property type="entry name" value="TRANSPOSASE, PUTATIVE-RELATED"/>
    <property type="match status" value="1"/>
</dbReference>
<dbReference type="PANTHER" id="PTHR42648:SF11">
    <property type="entry name" value="TRANSPOSON TY4-P GAG-POL POLYPROTEIN"/>
    <property type="match status" value="1"/>
</dbReference>
<dbReference type="Pfam" id="PF00665">
    <property type="entry name" value="rve"/>
    <property type="match status" value="1"/>
</dbReference>
<dbReference type="Pfam" id="PF07727">
    <property type="entry name" value="RVT_2"/>
    <property type="match status" value="1"/>
</dbReference>
<dbReference type="Pfam" id="PF01021">
    <property type="entry name" value="TYA"/>
    <property type="match status" value="1"/>
</dbReference>
<dbReference type="SUPFAM" id="SSF56672">
    <property type="entry name" value="DNA/RNA polymerases"/>
    <property type="match status" value="1"/>
</dbReference>
<dbReference type="SUPFAM" id="SSF53098">
    <property type="entry name" value="Ribonuclease H-like"/>
    <property type="match status" value="1"/>
</dbReference>
<dbReference type="PROSITE" id="PS00141">
    <property type="entry name" value="ASP_PROTEASE"/>
    <property type="match status" value="1"/>
</dbReference>
<dbReference type="PROSITE" id="PS50994">
    <property type="entry name" value="INTEGRASE"/>
    <property type="match status" value="1"/>
</dbReference>
<protein>
    <recommendedName>
        <fullName>Transposon Ty1-MR2 Gag-Pol polyprotein</fullName>
    </recommendedName>
    <alternativeName>
        <fullName>Gag-Pol-p199</fullName>
    </alternativeName>
    <alternativeName>
        <fullName>TY1A-TY1B</fullName>
    </alternativeName>
    <alternativeName>
        <fullName>Transposon Ty1 TYA-TYB polyprotein</fullName>
    </alternativeName>
    <alternativeName>
        <fullName>p190</fullName>
    </alternativeName>
    <component>
        <recommendedName>
            <fullName>Capsid protein</fullName>
            <shortName>CA</shortName>
        </recommendedName>
        <alternativeName>
            <fullName>Gag-p45</fullName>
        </alternativeName>
        <alternativeName>
            <fullName>p54</fullName>
        </alternativeName>
    </component>
    <component>
        <recommendedName>
            <fullName>Ty1 protease</fullName>
            <shortName>PR</shortName>
            <ecNumber>3.4.23.-</ecNumber>
        </recommendedName>
        <alternativeName>
            <fullName>Pol-p20</fullName>
        </alternativeName>
        <alternativeName>
            <fullName>p23</fullName>
        </alternativeName>
    </component>
    <component>
        <recommendedName>
            <fullName>Integrase</fullName>
            <shortName>IN</shortName>
        </recommendedName>
        <alternativeName>
            <fullName>Pol-p71</fullName>
        </alternativeName>
        <alternativeName>
            <fullName>p84</fullName>
        </alternativeName>
        <alternativeName>
            <fullName>p90</fullName>
        </alternativeName>
    </component>
    <component>
        <recommendedName>
            <fullName>Reverse transcriptase/ribonuclease H</fullName>
            <shortName>RT</shortName>
            <shortName>RT-RH</shortName>
            <ecNumber>2.7.7.49</ecNumber>
            <ecNumber>2.7.7.7</ecNumber>
            <ecNumber>3.1.26.4</ecNumber>
        </recommendedName>
        <alternativeName>
            <fullName>Pol-p63</fullName>
        </alternativeName>
        <alternativeName>
            <fullName>p60</fullName>
        </alternativeName>
    </component>
</protein>
<name>YM14B_YEAST</name>
<accession>Q04670</accession>
<accession>D6VZM5</accession>
<proteinExistence type="inferred from homology"/>
<reference key="1">
    <citation type="journal article" date="1997" name="Nature">
        <title>The nucleotide sequence of Saccharomyces cerevisiae chromosome XIII.</title>
        <authorList>
            <person name="Bowman S."/>
            <person name="Churcher C.M."/>
            <person name="Badcock K."/>
            <person name="Brown D."/>
            <person name="Chillingworth T."/>
            <person name="Connor R."/>
            <person name="Dedman K."/>
            <person name="Devlin K."/>
            <person name="Gentles S."/>
            <person name="Hamlin N."/>
            <person name="Hunt S."/>
            <person name="Jagels K."/>
            <person name="Lye G."/>
            <person name="Moule S."/>
            <person name="Odell C."/>
            <person name="Pearson D."/>
            <person name="Rajandream M.A."/>
            <person name="Rice P."/>
            <person name="Skelton J."/>
            <person name="Walsh S.V."/>
            <person name="Whitehead S."/>
            <person name="Barrell B.G."/>
        </authorList>
    </citation>
    <scope>NUCLEOTIDE SEQUENCE [LARGE SCALE GENOMIC DNA]</scope>
    <source>
        <strain>ATCC 204508 / S288c</strain>
    </source>
</reference>
<reference key="2">
    <citation type="journal article" date="2014" name="G3 (Bethesda)">
        <title>The reference genome sequence of Saccharomyces cerevisiae: Then and now.</title>
        <authorList>
            <person name="Engel S.R."/>
            <person name="Dietrich F.S."/>
            <person name="Fisk D.G."/>
            <person name="Binkley G."/>
            <person name="Balakrishnan R."/>
            <person name="Costanzo M.C."/>
            <person name="Dwight S.S."/>
            <person name="Hitz B.C."/>
            <person name="Karra K."/>
            <person name="Nash R.S."/>
            <person name="Weng S."/>
            <person name="Wong E.D."/>
            <person name="Lloyd P."/>
            <person name="Skrzypek M.S."/>
            <person name="Miyasato S.R."/>
            <person name="Simison M."/>
            <person name="Cherry J.M."/>
        </authorList>
    </citation>
    <scope>GENOME REANNOTATION</scope>
    <source>
        <strain>ATCC 204508 / S288c</strain>
    </source>
</reference>
<reference key="3">
    <citation type="journal article" date="1998" name="Genome Res.">
        <title>Transposable elements and genome organization: a comprehensive survey of retrotransposons revealed by the complete Saccharomyces cerevisiae genome sequence.</title>
        <authorList>
            <person name="Kim J.M."/>
            <person name="Vanguri S."/>
            <person name="Boeke J.D."/>
            <person name="Gabriel A."/>
            <person name="Voytas D.F."/>
        </authorList>
    </citation>
    <scope>NOMENCLATURE</scope>
</reference>
<reference key="4">
    <citation type="journal article" date="2005" name="Cytogenet. Genome Res.">
        <title>Happy together: the life and times of Ty retrotransposons and their hosts.</title>
        <authorList>
            <person name="Lesage P."/>
            <person name="Todeschini A.L."/>
        </authorList>
    </citation>
    <scope>REVIEW</scope>
</reference>
<reference key="5">
    <citation type="journal article" date="2005" name="Cytogenet. Genome Res.">
        <title>Reverse transcriptase and integrase of the Saccharomyces cerevisiae Ty1 element.</title>
        <authorList>
            <person name="Wilhelm F.-X."/>
            <person name="Wilhelm M."/>
            <person name="Gabriel A."/>
        </authorList>
    </citation>
    <scope>REVIEW</scope>
    <scope>DOMAINS</scope>
</reference>
<gene>
    <name type="primary">TY1B-MR2</name>
    <name type="synonym">YMRCTy1-4 POL</name>
    <name type="ordered locus">YMR050C</name>
    <name type="ORF">YM9796.03C</name>
</gene>
<keyword id="KW-0064">Aspartyl protease</keyword>
<keyword id="KW-0067">ATP-binding</keyword>
<keyword id="KW-0963">Cytoplasm</keyword>
<keyword id="KW-0229">DNA integration</keyword>
<keyword id="KW-0233">DNA recombination</keyword>
<keyword id="KW-0238">DNA-binding</keyword>
<keyword id="KW-0239">DNA-directed DNA polymerase</keyword>
<keyword id="KW-0255">Endonuclease</keyword>
<keyword id="KW-0378">Hydrolase</keyword>
<keyword id="KW-0460">Magnesium</keyword>
<keyword id="KW-0479">Metal-binding</keyword>
<keyword id="KW-0511">Multifunctional enzyme</keyword>
<keyword id="KW-0540">Nuclease</keyword>
<keyword id="KW-0547">Nucleotide-binding</keyword>
<keyword id="KW-0548">Nucleotidyltransferase</keyword>
<keyword id="KW-0539">Nucleus</keyword>
<keyword id="KW-0597">Phosphoprotein</keyword>
<keyword id="KW-0645">Protease</keyword>
<keyword id="KW-1185">Reference proteome</keyword>
<keyword id="KW-0688">Ribosomal frameshifting</keyword>
<keyword id="KW-0694">RNA-binding</keyword>
<keyword id="KW-0695">RNA-directed DNA polymerase</keyword>
<keyword id="KW-0808">Transferase</keyword>
<keyword id="KW-0814">Transposable element</keyword>
<keyword id="KW-0815">Transposition</keyword>
<keyword id="KW-1188">Viral release from host cell</keyword>
<keyword id="KW-0917">Virion maturation</keyword>
<keyword id="KW-0862">Zinc</keyword>
<keyword id="KW-0863">Zinc-finger</keyword>
<sequence length="1755" mass="198555">MESQQLSNYPHISHGSACASVTSKEVHTNQDPLDVSASKIQEYDKASTKANSQQTTTPASSAVPENPHHASPQPASVPPPQNGPYPQQCMMTQNQANPSGWSFYGHPSMIPYTPYQMSPMYFPPGPQSQFPQYPSSVGTPLSTPSPESGNTFTDSSSADSDMTSTKKYVRPPPMLTSPNDFPNWVKTYIKFLQNSNLGGIIPTVNGKPVRQITDDELTFLYNTFQIFAPSQFLPTWVKDILSVDYTDIMKILSKSIEKMQSDTQEANDIVTLANLQYNGSTPADAFETKVTNIIDRLNNNGIHINNKVACQLIMRGLSGEYKFLRYTRHRHLNMTVAELFLDIHAIYEEQQGSRNSKPNYRRNPSDEKNDSRSYTNTTKPKVIARNPQKTNNSKSKTARAHNVSTSNNSPSTDNDSISKSTTEPIQLNNKHDLHLGQKLTESTVNHTNHSDDELPGHLLLDSGASRTLIRSAHHIHSASSNPDINVVDAQKRNIPINAIGDLQFHFQDNTKTSIKVLHTPNIAYDLLSLNELAAVDITACFTKNVLERSDGTVLAPIVKYGDFYWVSKKYLLPSNISVPTINNVHTSESTRKYPYPFIHRMLAHANAQTIRYSLKNNTITYFNESDVDWSSAIDYQCPDCLIGKSTKHRHIKGSRLKYQNSYEPFQYLHTDIFGPVHNLPKSAPSYFISFTDETTKFRWVYPLHDRREDSILDVFTTILAFIKNQFQASVLVIQMDRGSEYTNRTLHKFLEKNGITPCYTTTADSRAHGVAERLNRTLLDDCRTQLQCSGLPNHLWFSAIEFSTIVRNSLASPKSKKSARQHAGLAGLDISTLLPFGQPVIVNDHNPNSKIHPRGIPGYALHPSRNSYGYIIYLPSLKKTVDTTNYVILQGKESRLDQFNYDALTFDEDLNRLTASYQSFIASNEIQQSDDLNIESDHDFQSDIELHPEQPRNVLSKAVSPTDSTPPSTHTEDSKRVSKTNIRAPREVDPNISESNILPSKKRSSTPQISNIESTGSGGMHKLNVPLLAPMSQSNTHESSHASKSKDFRHSDSYSENETNHTNVPISSTGGTNNKTVPQISDQETEKRIIHRSPSIDASPPENNSSHNIVPIKTPTTVSEQNTEESIIADLPLPDLPPESPTEFPDPFKELPPINSRQTNSSLGGIGDSNAYTTINSKKRSLEDNETEIKVSRDTWNTKNMRSLEPPRSKKRIHLIAAVKAVKSIKPIRTTLRYDEAITYNKDIKEKEKYIQAYHKEVNQLLKMKTWDTDRYYDRKEIDPKRVINSMFIFNRKRDGTHKARFVARGDIQHPDTYDPGMQSNTVHHYALMTSLSLALDNNYYITQLDISSAYLYADIKEELYIRPPPHLGMNDKLIRLKKSLYGLKQSGANWYETIKSYLIKQCGMEEVRGWSCVFKNSQVTICLFVDDMILFSKDLNANKKIITTLKKQYDTKIINLGESDNEIQYDILGLEIKYQRGKYMKLGMENSLTEKIPKLNVPLNPKGRKLSAPGQPGLYIDQQELELEEDDYKMKVHEMQKLIGLASYVGYKFRFDLLYYINTLAQHILFPSKQVLDMTYELIQFIWNTRDKQLIWHKSKPVKPTNKLVVISDASYGNQPYYKSQIGNIYLLNGKVIGGKSTKASLTCTSTTEAEIHAISESVPLLNNLSHLVQELNKKPITKGLLTDSKSTISIIISNNEEKFRNRFFGTKAMRLRDEVSGNHLHVCYIETKKNIADVMTKPLPIKTFKLLTNKWIH</sequence>